<name>RS8_STRU0</name>
<keyword id="KW-1185">Reference proteome</keyword>
<keyword id="KW-0687">Ribonucleoprotein</keyword>
<keyword id="KW-0689">Ribosomal protein</keyword>
<keyword id="KW-0694">RNA-binding</keyword>
<keyword id="KW-0699">rRNA-binding</keyword>
<evidence type="ECO:0000255" key="1">
    <source>
        <dbReference type="HAMAP-Rule" id="MF_01302"/>
    </source>
</evidence>
<evidence type="ECO:0000305" key="2"/>
<protein>
    <recommendedName>
        <fullName evidence="1">Small ribosomal subunit protein uS8</fullName>
    </recommendedName>
    <alternativeName>
        <fullName evidence="2">30S ribosomal protein S8</fullName>
    </alternativeName>
</protein>
<sequence length="132" mass="14757">MVMTDPIADFLTRIRNANLAKHEVLEVPASNIKKGIAEILKREGFVKNVEVIEDDKQGIIRVFLKYGQNGERVITNLKRISKPGLRVYSKREDVPKVLNGLGIAIISTSEGLLTDKEARQKNVGGEVIAYVW</sequence>
<proteinExistence type="inferred from homology"/>
<feature type="chain" id="PRO_1000165354" description="Small ribosomal subunit protein uS8">
    <location>
        <begin position="1"/>
        <end position="132"/>
    </location>
</feature>
<accession>B9DSW4</accession>
<dbReference type="EMBL" id="AM946015">
    <property type="protein sequence ID" value="CAR40462.1"/>
    <property type="molecule type" value="Genomic_DNA"/>
</dbReference>
<dbReference type="RefSeq" id="WP_012657643.1">
    <property type="nucleotide sequence ID" value="NC_012004.1"/>
</dbReference>
<dbReference type="SMR" id="B9DSW4"/>
<dbReference type="STRING" id="218495.SUB0082"/>
<dbReference type="GeneID" id="93825308"/>
<dbReference type="KEGG" id="sub:SUB0082"/>
<dbReference type="eggNOG" id="COG0096">
    <property type="taxonomic scope" value="Bacteria"/>
</dbReference>
<dbReference type="HOGENOM" id="CLU_098428_0_2_9"/>
<dbReference type="OrthoDB" id="9802617at2"/>
<dbReference type="Proteomes" id="UP000000449">
    <property type="component" value="Chromosome"/>
</dbReference>
<dbReference type="GO" id="GO:1990904">
    <property type="term" value="C:ribonucleoprotein complex"/>
    <property type="evidence" value="ECO:0007669"/>
    <property type="project" value="UniProtKB-KW"/>
</dbReference>
<dbReference type="GO" id="GO:0005840">
    <property type="term" value="C:ribosome"/>
    <property type="evidence" value="ECO:0007669"/>
    <property type="project" value="UniProtKB-KW"/>
</dbReference>
<dbReference type="GO" id="GO:0019843">
    <property type="term" value="F:rRNA binding"/>
    <property type="evidence" value="ECO:0007669"/>
    <property type="project" value="UniProtKB-UniRule"/>
</dbReference>
<dbReference type="GO" id="GO:0003735">
    <property type="term" value="F:structural constituent of ribosome"/>
    <property type="evidence" value="ECO:0007669"/>
    <property type="project" value="InterPro"/>
</dbReference>
<dbReference type="GO" id="GO:0006412">
    <property type="term" value="P:translation"/>
    <property type="evidence" value="ECO:0007669"/>
    <property type="project" value="UniProtKB-UniRule"/>
</dbReference>
<dbReference type="FunFam" id="3.30.1370.30:FF:000002">
    <property type="entry name" value="30S ribosomal protein S8"/>
    <property type="match status" value="1"/>
</dbReference>
<dbReference type="FunFam" id="3.30.1490.10:FF:000001">
    <property type="entry name" value="30S ribosomal protein S8"/>
    <property type="match status" value="1"/>
</dbReference>
<dbReference type="Gene3D" id="3.30.1370.30">
    <property type="match status" value="1"/>
</dbReference>
<dbReference type="Gene3D" id="3.30.1490.10">
    <property type="match status" value="1"/>
</dbReference>
<dbReference type="HAMAP" id="MF_01302_B">
    <property type="entry name" value="Ribosomal_uS8_B"/>
    <property type="match status" value="1"/>
</dbReference>
<dbReference type="InterPro" id="IPR000630">
    <property type="entry name" value="Ribosomal_uS8"/>
</dbReference>
<dbReference type="InterPro" id="IPR047863">
    <property type="entry name" value="Ribosomal_uS8_CS"/>
</dbReference>
<dbReference type="InterPro" id="IPR035987">
    <property type="entry name" value="Ribosomal_uS8_sf"/>
</dbReference>
<dbReference type="NCBIfam" id="NF001109">
    <property type="entry name" value="PRK00136.1"/>
    <property type="match status" value="1"/>
</dbReference>
<dbReference type="PANTHER" id="PTHR11758">
    <property type="entry name" value="40S RIBOSOMAL PROTEIN S15A"/>
    <property type="match status" value="1"/>
</dbReference>
<dbReference type="Pfam" id="PF00410">
    <property type="entry name" value="Ribosomal_S8"/>
    <property type="match status" value="1"/>
</dbReference>
<dbReference type="SUPFAM" id="SSF56047">
    <property type="entry name" value="Ribosomal protein S8"/>
    <property type="match status" value="1"/>
</dbReference>
<dbReference type="PROSITE" id="PS00053">
    <property type="entry name" value="RIBOSOMAL_S8"/>
    <property type="match status" value="1"/>
</dbReference>
<organism>
    <name type="scientific">Streptococcus uberis (strain ATCC BAA-854 / 0140J)</name>
    <dbReference type="NCBI Taxonomy" id="218495"/>
    <lineage>
        <taxon>Bacteria</taxon>
        <taxon>Bacillati</taxon>
        <taxon>Bacillota</taxon>
        <taxon>Bacilli</taxon>
        <taxon>Lactobacillales</taxon>
        <taxon>Streptococcaceae</taxon>
        <taxon>Streptococcus</taxon>
    </lineage>
</organism>
<comment type="function">
    <text evidence="1">One of the primary rRNA binding proteins, it binds directly to 16S rRNA central domain where it helps coordinate assembly of the platform of the 30S subunit.</text>
</comment>
<comment type="subunit">
    <text evidence="1">Part of the 30S ribosomal subunit. Contacts proteins S5 and S12.</text>
</comment>
<comment type="similarity">
    <text evidence="1">Belongs to the universal ribosomal protein uS8 family.</text>
</comment>
<gene>
    <name evidence="1" type="primary">rpsH</name>
    <name type="ordered locus">SUB0082</name>
</gene>
<reference key="1">
    <citation type="journal article" date="2009" name="BMC Genomics">
        <title>Evidence for niche adaptation in the genome of the bovine pathogen Streptococcus uberis.</title>
        <authorList>
            <person name="Ward P.N."/>
            <person name="Holden M.T.G."/>
            <person name="Leigh J.A."/>
            <person name="Lennard N."/>
            <person name="Bignell A."/>
            <person name="Barron A."/>
            <person name="Clark L."/>
            <person name="Quail M.A."/>
            <person name="Woodward J."/>
            <person name="Barrell B.G."/>
            <person name="Egan S.A."/>
            <person name="Field T.R."/>
            <person name="Maskell D."/>
            <person name="Kehoe M."/>
            <person name="Dowson C.G."/>
            <person name="Chanter N."/>
            <person name="Whatmore A.M."/>
            <person name="Bentley S.D."/>
            <person name="Parkhill J."/>
        </authorList>
    </citation>
    <scope>NUCLEOTIDE SEQUENCE [LARGE SCALE GENOMIC DNA]</scope>
    <source>
        <strain>ATCC BAA-854 / 0140J</strain>
    </source>
</reference>